<protein>
    <recommendedName>
        <fullName evidence="1">Chorismate synthase</fullName>
        <shortName evidence="1">CS</shortName>
        <ecNumber evidence="1">4.2.3.5</ecNumber>
    </recommendedName>
    <alternativeName>
        <fullName evidence="1">5-enolpyruvylshikimate-3-phosphate phospholyase</fullName>
    </alternativeName>
</protein>
<reference key="1">
    <citation type="journal article" date="2006" name="Proc. Natl. Acad. Sci. U.S.A.">
        <title>The partitioned Rhizobium etli genome: genetic and metabolic redundancy in seven interacting replicons.</title>
        <authorList>
            <person name="Gonzalez V."/>
            <person name="Santamaria R.I."/>
            <person name="Bustos P."/>
            <person name="Hernandez-Gonzalez I."/>
            <person name="Medrano-Soto A."/>
            <person name="Moreno-Hagelsieb G."/>
            <person name="Janga S.C."/>
            <person name="Ramirez M.A."/>
            <person name="Jimenez-Jacinto V."/>
            <person name="Collado-Vides J."/>
            <person name="Davila G."/>
        </authorList>
    </citation>
    <scope>NUCLEOTIDE SEQUENCE [LARGE SCALE GENOMIC DNA]</scope>
    <source>
        <strain>ATCC 51251 / DSM 11541 / JCM 21823 / NBRC 15573 / CFN 42</strain>
    </source>
</reference>
<proteinExistence type="inferred from homology"/>
<name>AROC_RHIEC</name>
<feature type="chain" id="PRO_1000022534" description="Chorismate synthase">
    <location>
        <begin position="1"/>
        <end position="365"/>
    </location>
</feature>
<feature type="binding site" evidence="1">
    <location>
        <position position="48"/>
    </location>
    <ligand>
        <name>NADP(+)</name>
        <dbReference type="ChEBI" id="CHEBI:58349"/>
    </ligand>
</feature>
<feature type="binding site" evidence="1">
    <location>
        <position position="54"/>
    </location>
    <ligand>
        <name>NADP(+)</name>
        <dbReference type="ChEBI" id="CHEBI:58349"/>
    </ligand>
</feature>
<feature type="binding site" evidence="1">
    <location>
        <begin position="131"/>
        <end position="133"/>
    </location>
    <ligand>
        <name>FMN</name>
        <dbReference type="ChEBI" id="CHEBI:58210"/>
    </ligand>
</feature>
<feature type="binding site" evidence="1">
    <location>
        <begin position="243"/>
        <end position="244"/>
    </location>
    <ligand>
        <name>FMN</name>
        <dbReference type="ChEBI" id="CHEBI:58210"/>
    </ligand>
</feature>
<feature type="binding site" evidence="1">
    <location>
        <position position="288"/>
    </location>
    <ligand>
        <name>FMN</name>
        <dbReference type="ChEBI" id="CHEBI:58210"/>
    </ligand>
</feature>
<feature type="binding site" evidence="1">
    <location>
        <begin position="303"/>
        <end position="307"/>
    </location>
    <ligand>
        <name>FMN</name>
        <dbReference type="ChEBI" id="CHEBI:58210"/>
    </ligand>
</feature>
<feature type="binding site" evidence="1">
    <location>
        <position position="329"/>
    </location>
    <ligand>
        <name>FMN</name>
        <dbReference type="ChEBI" id="CHEBI:58210"/>
    </ligand>
</feature>
<comment type="function">
    <text evidence="1">Catalyzes the anti-1,4-elimination of the C-3 phosphate and the C-6 proR hydrogen from 5-enolpyruvylshikimate-3-phosphate (EPSP) to yield chorismate, which is the branch point compound that serves as the starting substrate for the three terminal pathways of aromatic amino acid biosynthesis. This reaction introduces a second double bond into the aromatic ring system.</text>
</comment>
<comment type="catalytic activity">
    <reaction evidence="1">
        <text>5-O-(1-carboxyvinyl)-3-phosphoshikimate = chorismate + phosphate</text>
        <dbReference type="Rhea" id="RHEA:21020"/>
        <dbReference type="ChEBI" id="CHEBI:29748"/>
        <dbReference type="ChEBI" id="CHEBI:43474"/>
        <dbReference type="ChEBI" id="CHEBI:57701"/>
        <dbReference type="EC" id="4.2.3.5"/>
    </reaction>
</comment>
<comment type="cofactor">
    <cofactor evidence="1">
        <name>FMNH2</name>
        <dbReference type="ChEBI" id="CHEBI:57618"/>
    </cofactor>
    <text evidence="1">Reduced FMN (FMNH(2)).</text>
</comment>
<comment type="pathway">
    <text evidence="1">Metabolic intermediate biosynthesis; chorismate biosynthesis; chorismate from D-erythrose 4-phosphate and phosphoenolpyruvate: step 7/7.</text>
</comment>
<comment type="subunit">
    <text evidence="1">Homotetramer.</text>
</comment>
<comment type="similarity">
    <text evidence="1">Belongs to the chorismate synthase family.</text>
</comment>
<dbReference type="EC" id="4.2.3.5" evidence="1"/>
<dbReference type="EMBL" id="CP000133">
    <property type="protein sequence ID" value="ABC89746.1"/>
    <property type="molecule type" value="Genomic_DNA"/>
</dbReference>
<dbReference type="RefSeq" id="WP_011424282.1">
    <property type="nucleotide sequence ID" value="NC_007761.1"/>
</dbReference>
<dbReference type="SMR" id="Q2KBP0"/>
<dbReference type="KEGG" id="ret:RHE_CH00935"/>
<dbReference type="eggNOG" id="COG0082">
    <property type="taxonomic scope" value="Bacteria"/>
</dbReference>
<dbReference type="HOGENOM" id="CLU_034547_0_0_5"/>
<dbReference type="OrthoDB" id="9771806at2"/>
<dbReference type="UniPathway" id="UPA00053">
    <property type="reaction ID" value="UER00090"/>
</dbReference>
<dbReference type="Proteomes" id="UP000001936">
    <property type="component" value="Chromosome"/>
</dbReference>
<dbReference type="GO" id="GO:0005829">
    <property type="term" value="C:cytosol"/>
    <property type="evidence" value="ECO:0007669"/>
    <property type="project" value="TreeGrafter"/>
</dbReference>
<dbReference type="GO" id="GO:0004107">
    <property type="term" value="F:chorismate synthase activity"/>
    <property type="evidence" value="ECO:0007669"/>
    <property type="project" value="UniProtKB-UniRule"/>
</dbReference>
<dbReference type="GO" id="GO:0010181">
    <property type="term" value="F:FMN binding"/>
    <property type="evidence" value="ECO:0007669"/>
    <property type="project" value="TreeGrafter"/>
</dbReference>
<dbReference type="GO" id="GO:0008652">
    <property type="term" value="P:amino acid biosynthetic process"/>
    <property type="evidence" value="ECO:0007669"/>
    <property type="project" value="UniProtKB-KW"/>
</dbReference>
<dbReference type="GO" id="GO:0009073">
    <property type="term" value="P:aromatic amino acid family biosynthetic process"/>
    <property type="evidence" value="ECO:0007669"/>
    <property type="project" value="UniProtKB-KW"/>
</dbReference>
<dbReference type="GO" id="GO:0009423">
    <property type="term" value="P:chorismate biosynthetic process"/>
    <property type="evidence" value="ECO:0007669"/>
    <property type="project" value="UniProtKB-UniRule"/>
</dbReference>
<dbReference type="CDD" id="cd07304">
    <property type="entry name" value="Chorismate_synthase"/>
    <property type="match status" value="1"/>
</dbReference>
<dbReference type="Gene3D" id="3.60.150.10">
    <property type="entry name" value="Chorismate synthase AroC"/>
    <property type="match status" value="1"/>
</dbReference>
<dbReference type="HAMAP" id="MF_00300">
    <property type="entry name" value="Chorismate_synth"/>
    <property type="match status" value="1"/>
</dbReference>
<dbReference type="InterPro" id="IPR000453">
    <property type="entry name" value="Chorismate_synth"/>
</dbReference>
<dbReference type="InterPro" id="IPR035904">
    <property type="entry name" value="Chorismate_synth_AroC_sf"/>
</dbReference>
<dbReference type="InterPro" id="IPR020541">
    <property type="entry name" value="Chorismate_synthase_CS"/>
</dbReference>
<dbReference type="NCBIfam" id="TIGR00033">
    <property type="entry name" value="aroC"/>
    <property type="match status" value="1"/>
</dbReference>
<dbReference type="NCBIfam" id="NF003793">
    <property type="entry name" value="PRK05382.1"/>
    <property type="match status" value="1"/>
</dbReference>
<dbReference type="PANTHER" id="PTHR21085">
    <property type="entry name" value="CHORISMATE SYNTHASE"/>
    <property type="match status" value="1"/>
</dbReference>
<dbReference type="PANTHER" id="PTHR21085:SF0">
    <property type="entry name" value="CHORISMATE SYNTHASE"/>
    <property type="match status" value="1"/>
</dbReference>
<dbReference type="Pfam" id="PF01264">
    <property type="entry name" value="Chorismate_synt"/>
    <property type="match status" value="1"/>
</dbReference>
<dbReference type="PIRSF" id="PIRSF001456">
    <property type="entry name" value="Chorismate_synth"/>
    <property type="match status" value="1"/>
</dbReference>
<dbReference type="SUPFAM" id="SSF103263">
    <property type="entry name" value="Chorismate synthase, AroC"/>
    <property type="match status" value="1"/>
</dbReference>
<dbReference type="PROSITE" id="PS00787">
    <property type="entry name" value="CHORISMATE_SYNTHASE_1"/>
    <property type="match status" value="1"/>
</dbReference>
<dbReference type="PROSITE" id="PS00789">
    <property type="entry name" value="CHORISMATE_SYNTHASE_3"/>
    <property type="match status" value="1"/>
</dbReference>
<accession>Q2KBP0</accession>
<organism>
    <name type="scientific">Rhizobium etli (strain ATCC 51251 / DSM 11541 / JCM 21823 / NBRC 15573 / CFN 42)</name>
    <dbReference type="NCBI Taxonomy" id="347834"/>
    <lineage>
        <taxon>Bacteria</taxon>
        <taxon>Pseudomonadati</taxon>
        <taxon>Pseudomonadota</taxon>
        <taxon>Alphaproteobacteria</taxon>
        <taxon>Hyphomicrobiales</taxon>
        <taxon>Rhizobiaceae</taxon>
        <taxon>Rhizobium/Agrobacterium group</taxon>
        <taxon>Rhizobium</taxon>
    </lineage>
</organism>
<keyword id="KW-0028">Amino-acid biosynthesis</keyword>
<keyword id="KW-0057">Aromatic amino acid biosynthesis</keyword>
<keyword id="KW-0274">FAD</keyword>
<keyword id="KW-0285">Flavoprotein</keyword>
<keyword id="KW-0288">FMN</keyword>
<keyword id="KW-0456">Lyase</keyword>
<keyword id="KW-0521">NADP</keyword>
<keyword id="KW-1185">Reference proteome</keyword>
<evidence type="ECO:0000255" key="1">
    <source>
        <dbReference type="HAMAP-Rule" id="MF_00300"/>
    </source>
</evidence>
<sequence length="365" mass="39276">MSHNTFGHLFRVTTWGESHGPALGCVVDGCPPGLRFKLEDLQVWLDKRKPGQSRFVTQRREDDLVKVLSGVMLDADGETMTSTGTPISMLIENTDQRSKDYGEIARQYRPGHADYTYDLKYGIRDYRGGGRSSARETAARVAAGGIARLVVPGVTVRGALVQIGKHKIDRRNWDWDQVDQNPFFSPDAAIVPVWEEYLDGIRKAGSSIGAVIEVIAEGVPAGLGAPIYSKLDQDIASLLMSINAVKGVEIGNGFAAAETSGEDNADAMRMGNDGTPIFLSNNAGGILGGISTGQPVVARFAVKPTSSILTERQSIDADGKNVDVRTKGRHDPCVGIRAVPIGEAMVACAIADHYLRDRGQTGRLK</sequence>
<gene>
    <name evidence="1" type="primary">aroC</name>
    <name type="ordered locus">RHE_CH00935</name>
</gene>